<organism>
    <name type="scientific">Amborella trichopoda</name>
    <dbReference type="NCBI Taxonomy" id="13333"/>
    <lineage>
        <taxon>Eukaryota</taxon>
        <taxon>Viridiplantae</taxon>
        <taxon>Streptophyta</taxon>
        <taxon>Embryophyta</taxon>
        <taxon>Tracheophyta</taxon>
        <taxon>Spermatophyta</taxon>
        <taxon>Magnoliopsida</taxon>
        <taxon>Amborellales</taxon>
        <taxon>Amborellaceae</taxon>
        <taxon>Amborella</taxon>
    </lineage>
</organism>
<geneLocation type="chloroplast"/>
<keyword id="KW-0066">ATP synthesis</keyword>
<keyword id="KW-0067">ATP-binding</keyword>
<keyword id="KW-0139">CF(1)</keyword>
<keyword id="KW-0150">Chloroplast</keyword>
<keyword id="KW-0375">Hydrogen ion transport</keyword>
<keyword id="KW-0406">Ion transport</keyword>
<keyword id="KW-0472">Membrane</keyword>
<keyword id="KW-0547">Nucleotide-binding</keyword>
<keyword id="KW-0934">Plastid</keyword>
<keyword id="KW-1185">Reference proteome</keyword>
<keyword id="KW-0793">Thylakoid</keyword>
<keyword id="KW-1278">Translocase</keyword>
<keyword id="KW-0813">Transport</keyword>
<proteinExistence type="inferred from homology"/>
<sequence>MVTIRADEISNIIRERIEQYNREVKIVNTGTVLQVGDGIARIHGLDEVMAGELVEFEESTIGIAPNLESNNVGVVLMGDGLMIQEGSSVKATGRIAQIPVSEAYLGRVINALAKPIDGRGEISSSESRLIESPAPGIISRRSVYEPLQTGLIAIDSMIPIGRGQRELIIGDRQTGKTAVATDTILNQKGQNVICVYVAIGQKASSVAQVVTTFQEQGAMEYTIVVAETADSPATLQYLAPYTGAALAEYFMYRERHTLIIHDDPSKQAQAYRQMSLLLRRPPGREAYPGDVFYLHSRLLERAAKSSSRLGEGSMTALPIVETQSGDVSAYIPTNVISITDGQIFLSADLFNAGIRPAINVGISVSRVGSAAQIKAMKQVAGKSKLELAQFAELEAFAQFASDLDKATQNQLARGQRLRELLKQSQAAPLAVEEQVVTIYTGANGYLDPLEIGQVKKFLVQLRTYLRTNKPQFQEIISSTRTFTEEAEAILKEAIQEQIELFLFQEQT</sequence>
<comment type="function">
    <text evidence="1">Produces ATP from ADP in the presence of a proton gradient across the membrane. The alpha chain is a regulatory subunit.</text>
</comment>
<comment type="catalytic activity">
    <reaction evidence="1">
        <text>ATP + H2O + 4 H(+)(in) = ADP + phosphate + 5 H(+)(out)</text>
        <dbReference type="Rhea" id="RHEA:57720"/>
        <dbReference type="ChEBI" id="CHEBI:15377"/>
        <dbReference type="ChEBI" id="CHEBI:15378"/>
        <dbReference type="ChEBI" id="CHEBI:30616"/>
        <dbReference type="ChEBI" id="CHEBI:43474"/>
        <dbReference type="ChEBI" id="CHEBI:456216"/>
        <dbReference type="EC" id="7.1.2.2"/>
    </reaction>
</comment>
<comment type="subunit">
    <text evidence="1">F-type ATPases have 2 components, CF(1) - the catalytic core - and CF(0) - the membrane proton channel. CF(1) has five subunits: alpha(3), beta(3), gamma(1), delta(1), epsilon(1). CF(0) has four main subunits: a, b, b' and c.</text>
</comment>
<comment type="subcellular location">
    <subcellularLocation>
        <location evidence="1">Plastid</location>
        <location evidence="1">Chloroplast thylakoid membrane</location>
        <topology evidence="1">Peripheral membrane protein</topology>
    </subcellularLocation>
</comment>
<comment type="similarity">
    <text evidence="1">Belongs to the ATPase alpha/beta chains family.</text>
</comment>
<gene>
    <name evidence="1" type="primary">atpA</name>
</gene>
<protein>
    <recommendedName>
        <fullName evidence="1">ATP synthase subunit alpha, chloroplastic</fullName>
        <ecNumber evidence="1">7.1.2.2</ecNumber>
    </recommendedName>
    <alternativeName>
        <fullName evidence="1">ATP synthase F1 sector subunit alpha</fullName>
    </alternativeName>
    <alternativeName>
        <fullName evidence="1">F-ATPase subunit alpha</fullName>
    </alternativeName>
</protein>
<evidence type="ECO:0000255" key="1">
    <source>
        <dbReference type="HAMAP-Rule" id="MF_01346"/>
    </source>
</evidence>
<dbReference type="EC" id="7.1.2.2" evidence="1"/>
<dbReference type="EMBL" id="AJ506156">
    <property type="protein sequence ID" value="CAD56281.1"/>
    <property type="molecule type" value="Genomic_DNA"/>
</dbReference>
<dbReference type="RefSeq" id="NP_904084.1">
    <property type="nucleotide sequence ID" value="NC_005086.1"/>
</dbReference>
<dbReference type="SMR" id="Q70XV0"/>
<dbReference type="STRING" id="13333.Q70XV0"/>
<dbReference type="GeneID" id="2546497"/>
<dbReference type="KEGG" id="atr:2546497"/>
<dbReference type="eggNOG" id="KOG1353">
    <property type="taxonomic scope" value="Eukaryota"/>
</dbReference>
<dbReference type="OrthoDB" id="9805536at2759"/>
<dbReference type="Proteomes" id="UP000017836">
    <property type="component" value="Chloroplast"/>
</dbReference>
<dbReference type="GO" id="GO:0009535">
    <property type="term" value="C:chloroplast thylakoid membrane"/>
    <property type="evidence" value="ECO:0007669"/>
    <property type="project" value="UniProtKB-SubCell"/>
</dbReference>
<dbReference type="GO" id="GO:0045259">
    <property type="term" value="C:proton-transporting ATP synthase complex"/>
    <property type="evidence" value="ECO:0007669"/>
    <property type="project" value="UniProtKB-KW"/>
</dbReference>
<dbReference type="GO" id="GO:0043531">
    <property type="term" value="F:ADP binding"/>
    <property type="evidence" value="ECO:0000318"/>
    <property type="project" value="GO_Central"/>
</dbReference>
<dbReference type="GO" id="GO:0005524">
    <property type="term" value="F:ATP binding"/>
    <property type="evidence" value="ECO:0000318"/>
    <property type="project" value="GO_Central"/>
</dbReference>
<dbReference type="GO" id="GO:0046933">
    <property type="term" value="F:proton-transporting ATP synthase activity, rotational mechanism"/>
    <property type="evidence" value="ECO:0007669"/>
    <property type="project" value="UniProtKB-UniRule"/>
</dbReference>
<dbReference type="GO" id="GO:0015986">
    <property type="term" value="P:proton motive force-driven ATP synthesis"/>
    <property type="evidence" value="ECO:0000318"/>
    <property type="project" value="GO_Central"/>
</dbReference>
<dbReference type="CDD" id="cd18113">
    <property type="entry name" value="ATP-synt_F1_alpha_C"/>
    <property type="match status" value="1"/>
</dbReference>
<dbReference type="CDD" id="cd18116">
    <property type="entry name" value="ATP-synt_F1_alpha_N"/>
    <property type="match status" value="1"/>
</dbReference>
<dbReference type="CDD" id="cd01132">
    <property type="entry name" value="F1-ATPase_alpha_CD"/>
    <property type="match status" value="1"/>
</dbReference>
<dbReference type="FunFam" id="1.20.150.20:FF:000001">
    <property type="entry name" value="ATP synthase subunit alpha"/>
    <property type="match status" value="1"/>
</dbReference>
<dbReference type="FunFam" id="2.40.30.20:FF:000001">
    <property type="entry name" value="ATP synthase subunit alpha"/>
    <property type="match status" value="1"/>
</dbReference>
<dbReference type="FunFam" id="3.40.50.300:FF:000002">
    <property type="entry name" value="ATP synthase subunit alpha"/>
    <property type="match status" value="1"/>
</dbReference>
<dbReference type="Gene3D" id="2.40.30.20">
    <property type="match status" value="1"/>
</dbReference>
<dbReference type="Gene3D" id="1.20.150.20">
    <property type="entry name" value="ATP synthase alpha/beta chain, C-terminal domain"/>
    <property type="match status" value="1"/>
</dbReference>
<dbReference type="Gene3D" id="3.40.50.300">
    <property type="entry name" value="P-loop containing nucleotide triphosphate hydrolases"/>
    <property type="match status" value="1"/>
</dbReference>
<dbReference type="HAMAP" id="MF_01346">
    <property type="entry name" value="ATP_synth_alpha_bact"/>
    <property type="match status" value="1"/>
</dbReference>
<dbReference type="InterPro" id="IPR023366">
    <property type="entry name" value="ATP_synth_asu-like_sf"/>
</dbReference>
<dbReference type="InterPro" id="IPR000793">
    <property type="entry name" value="ATP_synth_asu_C"/>
</dbReference>
<dbReference type="InterPro" id="IPR038376">
    <property type="entry name" value="ATP_synth_asu_C_sf"/>
</dbReference>
<dbReference type="InterPro" id="IPR033732">
    <property type="entry name" value="ATP_synth_F1_a_nt-bd_dom"/>
</dbReference>
<dbReference type="InterPro" id="IPR005294">
    <property type="entry name" value="ATP_synth_F1_asu"/>
</dbReference>
<dbReference type="InterPro" id="IPR020003">
    <property type="entry name" value="ATPase_a/bsu_AS"/>
</dbReference>
<dbReference type="InterPro" id="IPR004100">
    <property type="entry name" value="ATPase_F1/V1/A1_a/bsu_N"/>
</dbReference>
<dbReference type="InterPro" id="IPR036121">
    <property type="entry name" value="ATPase_F1/V1/A1_a/bsu_N_sf"/>
</dbReference>
<dbReference type="InterPro" id="IPR000194">
    <property type="entry name" value="ATPase_F1/V1/A1_a/bsu_nucl-bd"/>
</dbReference>
<dbReference type="InterPro" id="IPR027417">
    <property type="entry name" value="P-loop_NTPase"/>
</dbReference>
<dbReference type="NCBIfam" id="TIGR00962">
    <property type="entry name" value="atpA"/>
    <property type="match status" value="1"/>
</dbReference>
<dbReference type="NCBIfam" id="NF009884">
    <property type="entry name" value="PRK13343.1"/>
    <property type="match status" value="1"/>
</dbReference>
<dbReference type="PANTHER" id="PTHR48082">
    <property type="entry name" value="ATP SYNTHASE SUBUNIT ALPHA, MITOCHONDRIAL"/>
    <property type="match status" value="1"/>
</dbReference>
<dbReference type="PANTHER" id="PTHR48082:SF2">
    <property type="entry name" value="ATP SYNTHASE SUBUNIT ALPHA, MITOCHONDRIAL"/>
    <property type="match status" value="1"/>
</dbReference>
<dbReference type="Pfam" id="PF00006">
    <property type="entry name" value="ATP-synt_ab"/>
    <property type="match status" value="1"/>
</dbReference>
<dbReference type="Pfam" id="PF00306">
    <property type="entry name" value="ATP-synt_ab_C"/>
    <property type="match status" value="1"/>
</dbReference>
<dbReference type="Pfam" id="PF02874">
    <property type="entry name" value="ATP-synt_ab_N"/>
    <property type="match status" value="1"/>
</dbReference>
<dbReference type="PIRSF" id="PIRSF039088">
    <property type="entry name" value="F_ATPase_subunit_alpha"/>
    <property type="match status" value="1"/>
</dbReference>
<dbReference type="SUPFAM" id="SSF47917">
    <property type="entry name" value="C-terminal domain of alpha and beta subunits of F1 ATP synthase"/>
    <property type="match status" value="1"/>
</dbReference>
<dbReference type="SUPFAM" id="SSF50615">
    <property type="entry name" value="N-terminal domain of alpha and beta subunits of F1 ATP synthase"/>
    <property type="match status" value="1"/>
</dbReference>
<dbReference type="SUPFAM" id="SSF52540">
    <property type="entry name" value="P-loop containing nucleoside triphosphate hydrolases"/>
    <property type="match status" value="1"/>
</dbReference>
<dbReference type="PROSITE" id="PS00152">
    <property type="entry name" value="ATPASE_ALPHA_BETA"/>
    <property type="match status" value="1"/>
</dbReference>
<feature type="chain" id="PRO_0000238414" description="ATP synthase subunit alpha, chloroplastic">
    <location>
        <begin position="1"/>
        <end position="507"/>
    </location>
</feature>
<feature type="binding site" evidence="1">
    <location>
        <begin position="170"/>
        <end position="177"/>
    </location>
    <ligand>
        <name>ATP</name>
        <dbReference type="ChEBI" id="CHEBI:30616"/>
    </ligand>
</feature>
<feature type="site" description="Required for activity" evidence="1">
    <location>
        <position position="363"/>
    </location>
</feature>
<accession>Q70XV0</accession>
<reference key="1">
    <citation type="journal article" date="2003" name="Mol. Biol. Evol.">
        <title>Analysis of the Amborella trichopoda chloroplast genome sequence suggests that Amborella is not a basal angiosperm.</title>
        <authorList>
            <person name="Goremykin V.V."/>
            <person name="Hirsch-Ernst K.I."/>
            <person name="Wolfl S."/>
            <person name="Hellwig F.H."/>
        </authorList>
    </citation>
    <scope>NUCLEOTIDE SEQUENCE [LARGE SCALE GENOMIC DNA]</scope>
</reference>
<name>ATPA_AMBTC</name>